<name>GSA_HELMI</name>
<dbReference type="EC" id="5.4.3.8" evidence="1"/>
<dbReference type="EMBL" id="CP000930">
    <property type="protein sequence ID" value="ABZ84530.1"/>
    <property type="molecule type" value="Genomic_DNA"/>
</dbReference>
<dbReference type="SMR" id="B0TFV0"/>
<dbReference type="STRING" id="498761.HM1_1972"/>
<dbReference type="KEGG" id="hmo:HM1_1972"/>
<dbReference type="eggNOG" id="COG0001">
    <property type="taxonomic scope" value="Bacteria"/>
</dbReference>
<dbReference type="HOGENOM" id="CLU_016922_1_5_9"/>
<dbReference type="OrthoDB" id="9807885at2"/>
<dbReference type="UniPathway" id="UPA00251">
    <property type="reaction ID" value="UER00317"/>
</dbReference>
<dbReference type="UniPathway" id="UPA00668"/>
<dbReference type="Proteomes" id="UP000008550">
    <property type="component" value="Chromosome"/>
</dbReference>
<dbReference type="GO" id="GO:0005737">
    <property type="term" value="C:cytoplasm"/>
    <property type="evidence" value="ECO:0007669"/>
    <property type="project" value="UniProtKB-SubCell"/>
</dbReference>
<dbReference type="GO" id="GO:0042286">
    <property type="term" value="F:glutamate-1-semialdehyde 2,1-aminomutase activity"/>
    <property type="evidence" value="ECO:0007669"/>
    <property type="project" value="UniProtKB-UniRule"/>
</dbReference>
<dbReference type="GO" id="GO:0030170">
    <property type="term" value="F:pyridoxal phosphate binding"/>
    <property type="evidence" value="ECO:0007669"/>
    <property type="project" value="InterPro"/>
</dbReference>
<dbReference type="GO" id="GO:0008483">
    <property type="term" value="F:transaminase activity"/>
    <property type="evidence" value="ECO:0007669"/>
    <property type="project" value="InterPro"/>
</dbReference>
<dbReference type="GO" id="GO:0015995">
    <property type="term" value="P:chlorophyll biosynthetic process"/>
    <property type="evidence" value="ECO:0007669"/>
    <property type="project" value="UniProtKB-UniRule"/>
</dbReference>
<dbReference type="GO" id="GO:0006782">
    <property type="term" value="P:protoporphyrinogen IX biosynthetic process"/>
    <property type="evidence" value="ECO:0007669"/>
    <property type="project" value="UniProtKB-UniRule"/>
</dbReference>
<dbReference type="CDD" id="cd00610">
    <property type="entry name" value="OAT_like"/>
    <property type="match status" value="1"/>
</dbReference>
<dbReference type="FunFam" id="3.40.640.10:FF:000021">
    <property type="entry name" value="Glutamate-1-semialdehyde 2,1-aminomutase"/>
    <property type="match status" value="1"/>
</dbReference>
<dbReference type="Gene3D" id="3.90.1150.10">
    <property type="entry name" value="Aspartate Aminotransferase, domain 1"/>
    <property type="match status" value="1"/>
</dbReference>
<dbReference type="Gene3D" id="3.40.640.10">
    <property type="entry name" value="Type I PLP-dependent aspartate aminotransferase-like (Major domain)"/>
    <property type="match status" value="1"/>
</dbReference>
<dbReference type="HAMAP" id="MF_00375">
    <property type="entry name" value="HemL_aminotrans_3"/>
    <property type="match status" value="1"/>
</dbReference>
<dbReference type="InterPro" id="IPR004639">
    <property type="entry name" value="4pyrrol_synth_GluAld_NH2Trfase"/>
</dbReference>
<dbReference type="InterPro" id="IPR005814">
    <property type="entry name" value="Aminotrans_3"/>
</dbReference>
<dbReference type="InterPro" id="IPR049704">
    <property type="entry name" value="Aminotrans_3_PPA_site"/>
</dbReference>
<dbReference type="InterPro" id="IPR015424">
    <property type="entry name" value="PyrdxlP-dep_Trfase"/>
</dbReference>
<dbReference type="InterPro" id="IPR015421">
    <property type="entry name" value="PyrdxlP-dep_Trfase_major"/>
</dbReference>
<dbReference type="InterPro" id="IPR015422">
    <property type="entry name" value="PyrdxlP-dep_Trfase_small"/>
</dbReference>
<dbReference type="NCBIfam" id="TIGR00713">
    <property type="entry name" value="hemL"/>
    <property type="match status" value="1"/>
</dbReference>
<dbReference type="NCBIfam" id="NF000818">
    <property type="entry name" value="PRK00062.1"/>
    <property type="match status" value="1"/>
</dbReference>
<dbReference type="PANTHER" id="PTHR43713">
    <property type="entry name" value="GLUTAMATE-1-SEMIALDEHYDE 2,1-AMINOMUTASE"/>
    <property type="match status" value="1"/>
</dbReference>
<dbReference type="PANTHER" id="PTHR43713:SF3">
    <property type="entry name" value="GLUTAMATE-1-SEMIALDEHYDE 2,1-AMINOMUTASE 1, CHLOROPLASTIC-RELATED"/>
    <property type="match status" value="1"/>
</dbReference>
<dbReference type="Pfam" id="PF00202">
    <property type="entry name" value="Aminotran_3"/>
    <property type="match status" value="1"/>
</dbReference>
<dbReference type="SUPFAM" id="SSF53383">
    <property type="entry name" value="PLP-dependent transferases"/>
    <property type="match status" value="1"/>
</dbReference>
<dbReference type="PROSITE" id="PS00600">
    <property type="entry name" value="AA_TRANSFER_CLASS_3"/>
    <property type="match status" value="1"/>
</dbReference>
<feature type="chain" id="PRO_0000382322" description="Glutamate-1-semialdehyde 2,1-aminomutase">
    <location>
        <begin position="1"/>
        <end position="436"/>
    </location>
</feature>
<feature type="modified residue" description="N6-(pyridoxal phosphate)lysine" evidence="1">
    <location>
        <position position="269"/>
    </location>
</feature>
<protein>
    <recommendedName>
        <fullName evidence="1">Glutamate-1-semialdehyde 2,1-aminomutase</fullName>
        <shortName evidence="1">GSA</shortName>
        <ecNumber evidence="1">5.4.3.8</ecNumber>
    </recommendedName>
    <alternativeName>
        <fullName evidence="1">Glutamate-1-semialdehyde aminotransferase</fullName>
        <shortName evidence="1">GSA-AT</shortName>
    </alternativeName>
</protein>
<accession>B0TFV0</accession>
<evidence type="ECO:0000255" key="1">
    <source>
        <dbReference type="HAMAP-Rule" id="MF_00375"/>
    </source>
</evidence>
<keyword id="KW-0149">Chlorophyll biosynthesis</keyword>
<keyword id="KW-0963">Cytoplasm</keyword>
<keyword id="KW-0413">Isomerase</keyword>
<keyword id="KW-0627">Porphyrin biosynthesis</keyword>
<keyword id="KW-0663">Pyridoxal phosphate</keyword>
<keyword id="KW-1185">Reference proteome</keyword>
<organism>
    <name type="scientific">Heliobacterium modesticaldum (strain ATCC 51547 / Ice1)</name>
    <dbReference type="NCBI Taxonomy" id="498761"/>
    <lineage>
        <taxon>Bacteria</taxon>
        <taxon>Bacillati</taxon>
        <taxon>Bacillota</taxon>
        <taxon>Clostridia</taxon>
        <taxon>Eubacteriales</taxon>
        <taxon>Heliobacteriaceae</taxon>
        <taxon>Heliomicrobium</taxon>
    </lineage>
</organism>
<gene>
    <name evidence="1" type="primary">hemL</name>
    <name type="ordered locus">Helmi_19050</name>
    <name type="ORF">HM1_1972</name>
</gene>
<sequence length="436" mass="46074">MSRMYDRSEQLFAEAKTLIPGGVNSPVRAFKSVGRNPVFIERAEGAYLYDVDGNKYVDYVGSWGPMIVGHAHPEVSEALKAAIDRGTSYGAPTELESRLAKLILEAFPAMDMVRMVNSGTEATMSALRLARGYTGRSKIVKFEGCYHGHADSLLIKAGSGALTLGVPTSPGVPANIANNTITAPYNDLETLKAIFQEAGDDIAAIIIEGVPGNMGVVPPAPGYLQGVRELTRQYGALMIVDEVMSGFRVDFGGAQTLYGVEPDLTCLGKIIGGGLPVGAYGGKAEIMEKVSPAGPIYQAGTLSGNPLAMTAGIITLEILKRPGTYAALDEKAAYLADGLAKAAEKAGVPVWTNRVGSMLTGFFTDRPVVDFASACTSDTAAFGTYFRAMLDRGVYLACSQFEAAFLSLAMTKEDLDFTIAAAEEAFQVVAAERAKA</sequence>
<proteinExistence type="inferred from homology"/>
<reference key="1">
    <citation type="journal article" date="2008" name="J. Bacteriol.">
        <title>The genome of Heliobacterium modesticaldum, a phototrophic representative of the Firmicutes containing the simplest photosynthetic apparatus.</title>
        <authorList>
            <person name="Sattley W.M."/>
            <person name="Madigan M.T."/>
            <person name="Swingley W.D."/>
            <person name="Cheung P.C."/>
            <person name="Clocksin K.M."/>
            <person name="Conrad A.L."/>
            <person name="Dejesa L.C."/>
            <person name="Honchak B.M."/>
            <person name="Jung D.O."/>
            <person name="Karbach L.E."/>
            <person name="Kurdoglu A."/>
            <person name="Lahiri S."/>
            <person name="Mastrian S.D."/>
            <person name="Page L.E."/>
            <person name="Taylor H.L."/>
            <person name="Wang Z.T."/>
            <person name="Raymond J."/>
            <person name="Chen M."/>
            <person name="Blankenship R.E."/>
            <person name="Touchman J.W."/>
        </authorList>
    </citation>
    <scope>NUCLEOTIDE SEQUENCE [LARGE SCALE GENOMIC DNA]</scope>
    <source>
        <strain>ATCC 51547 / Ice1</strain>
    </source>
</reference>
<comment type="catalytic activity">
    <reaction evidence="1">
        <text>(S)-4-amino-5-oxopentanoate = 5-aminolevulinate</text>
        <dbReference type="Rhea" id="RHEA:14265"/>
        <dbReference type="ChEBI" id="CHEBI:57501"/>
        <dbReference type="ChEBI" id="CHEBI:356416"/>
        <dbReference type="EC" id="5.4.3.8"/>
    </reaction>
</comment>
<comment type="cofactor">
    <cofactor evidence="1">
        <name>pyridoxal 5'-phosphate</name>
        <dbReference type="ChEBI" id="CHEBI:597326"/>
    </cofactor>
</comment>
<comment type="pathway">
    <text evidence="1">Porphyrin-containing compound metabolism; protoporphyrin-IX biosynthesis; 5-aminolevulinate from L-glutamyl-tRNA(Glu): step 2/2.</text>
</comment>
<comment type="pathway">
    <text evidence="1">Porphyrin-containing compound metabolism; chlorophyll biosynthesis.</text>
</comment>
<comment type="subunit">
    <text evidence="1">Homodimer.</text>
</comment>
<comment type="subcellular location">
    <subcellularLocation>
        <location evidence="1">Cytoplasm</location>
    </subcellularLocation>
</comment>
<comment type="similarity">
    <text evidence="1">Belongs to the class-III pyridoxal-phosphate-dependent aminotransferase family. HemL subfamily.</text>
</comment>